<keyword id="KW-0010">Activator</keyword>
<keyword id="KW-0238">DNA-binding</keyword>
<keyword id="KW-0936">Ethylene signaling pathway</keyword>
<keyword id="KW-0539">Nucleus</keyword>
<keyword id="KW-1185">Reference proteome</keyword>
<keyword id="KW-0677">Repeat</keyword>
<keyword id="KW-0804">Transcription</keyword>
<keyword id="KW-0805">Transcription regulation</keyword>
<evidence type="ECO:0000250" key="1"/>
<evidence type="ECO:0000255" key="2">
    <source>
        <dbReference type="PROSITE-ProRule" id="PRU00366"/>
    </source>
</evidence>
<evidence type="ECO:0000256" key="3">
    <source>
        <dbReference type="SAM" id="MobiDB-lite"/>
    </source>
</evidence>
<evidence type="ECO:0000269" key="4">
    <source>
    </source>
</evidence>
<evidence type="ECO:0000269" key="5">
    <source>
    </source>
</evidence>
<evidence type="ECO:0000305" key="6"/>
<proteinExistence type="evidence at protein level"/>
<protein>
    <recommendedName>
        <fullName>AP2-like ethylene-responsive transcription factor TOE3</fullName>
    </recommendedName>
    <alternativeName>
        <fullName>Protein TARGET OF EAT 3</fullName>
    </alternativeName>
</protein>
<comment type="function">
    <text evidence="1 4 5">Probably acts as a transcriptional activator. Binds to the GCC-box pathogenesis-related promoter element. May be involved in the regulation of gene expression by stress factors and by components of stress signal transduction pathways (By similarity). May regulate negatively the transition to flowering time and confers flowering time delay.</text>
</comment>
<comment type="interaction">
    <interactant intactId="EBI-15202554">
        <id>Q9FH95</id>
    </interactant>
    <interactant intactId="EBI-4424563">
        <id>Q93Z00</id>
        <label>TCP14</label>
    </interactant>
    <organismsDiffer>false</organismsDiffer>
    <experiments>4</experiments>
</comment>
<comment type="interaction">
    <interactant intactId="EBI-15202554">
        <id>Q9FH95</id>
    </interactant>
    <interactant intactId="EBI-15192325">
        <id>Q8LPR5</id>
        <label>TCP4</label>
    </interactant>
    <organismsDiffer>false</organismsDiffer>
    <experiments>3</experiments>
</comment>
<comment type="subcellular location">
    <subcellularLocation>
        <location evidence="6">Nucleus</location>
    </subcellularLocation>
</comment>
<comment type="induction">
    <text evidence="4">Repressed by miR172a-2/EAT.</text>
</comment>
<comment type="similarity">
    <text evidence="6">Belongs to the AP2/ERF transcription factor family. AP2 subfamily.</text>
</comment>
<accession>Q9FH95</accession>
<sequence length="352" mass="39594">MWNLNDSPDHHEESDSRGNPVGHVSNGMSQSATWLPFVLPVTRNFFPAQSMEPGVRWSGFNSVGKSDPSGSGRPEEPEISPPIKKSRRGPRSRSSQYRGVTFYRRTGRWESHIWDCGKQVYLGGFDTAHAAARAYDRAAIKFRGVDADINFDIEDYLDDLKQMGNLTKEEFMHVLRRQSTGFPRGSSKYRGVTLHKCGRWESRLGQFLNKKYVYLGLFDTEIEAARAYDKAAIKCNGKDAVTNFDPKVYEEEEDLSSETTRNGHNLGLSLGESSSEEFRLKSDIASIRSRIRDEERLLGSDLSLAMMTTTVRSEKQQSDGGGNRVVGMAASSGFSPQPSPYRIPRTFHFSRP</sequence>
<organism>
    <name type="scientific">Arabidopsis thaliana</name>
    <name type="common">Mouse-ear cress</name>
    <dbReference type="NCBI Taxonomy" id="3702"/>
    <lineage>
        <taxon>Eukaryota</taxon>
        <taxon>Viridiplantae</taxon>
        <taxon>Streptophyta</taxon>
        <taxon>Embryophyta</taxon>
        <taxon>Tracheophyta</taxon>
        <taxon>Spermatophyta</taxon>
        <taxon>Magnoliopsida</taxon>
        <taxon>eudicotyledons</taxon>
        <taxon>Gunneridae</taxon>
        <taxon>Pentapetalae</taxon>
        <taxon>rosids</taxon>
        <taxon>malvids</taxon>
        <taxon>Brassicales</taxon>
        <taxon>Brassicaceae</taxon>
        <taxon>Camelineae</taxon>
        <taxon>Arabidopsis</taxon>
    </lineage>
</organism>
<name>TOE3_ARATH</name>
<feature type="chain" id="PRO_0000290368" description="AP2-like ethylene-responsive transcription factor TOE3">
    <location>
        <begin position="1"/>
        <end position="352"/>
    </location>
</feature>
<feature type="DNA-binding region" description="AP2/ERF 1" evidence="2">
    <location>
        <begin position="96"/>
        <end position="152"/>
    </location>
</feature>
<feature type="DNA-binding region" description="AP2/ERF 2" evidence="2">
    <location>
        <begin position="188"/>
        <end position="245"/>
    </location>
</feature>
<feature type="region of interest" description="Disordered" evidence="3">
    <location>
        <begin position="1"/>
        <end position="27"/>
    </location>
</feature>
<feature type="region of interest" description="Disordered" evidence="3">
    <location>
        <begin position="57"/>
        <end position="96"/>
    </location>
</feature>
<feature type="region of interest" description="Disordered" evidence="3">
    <location>
        <begin position="312"/>
        <end position="352"/>
    </location>
</feature>
<feature type="compositionally biased region" description="Basic and acidic residues" evidence="3">
    <location>
        <begin position="7"/>
        <end position="16"/>
    </location>
</feature>
<gene>
    <name type="primary">TOE3</name>
    <name type="ordered locus">At5g67180</name>
    <name type="ORF">K21H1.14</name>
</gene>
<dbReference type="EMBL" id="AB020742">
    <property type="protein sequence ID" value="BAB10952.1"/>
    <property type="molecule type" value="Genomic_DNA"/>
</dbReference>
<dbReference type="EMBL" id="CP002688">
    <property type="protein sequence ID" value="AED98311.1"/>
    <property type="molecule type" value="Genomic_DNA"/>
</dbReference>
<dbReference type="EMBL" id="AK176145">
    <property type="protein sequence ID" value="BAD43908.1"/>
    <property type="molecule type" value="mRNA"/>
</dbReference>
<dbReference type="EMBL" id="BT029206">
    <property type="protein sequence ID" value="ABJ17141.1"/>
    <property type="molecule type" value="mRNA"/>
</dbReference>
<dbReference type="EMBL" id="AY088238">
    <property type="protein sequence ID" value="AAM65779.1"/>
    <property type="molecule type" value="mRNA"/>
</dbReference>
<dbReference type="RefSeq" id="NP_201519.1">
    <property type="nucleotide sequence ID" value="NM_126118.4"/>
</dbReference>
<dbReference type="SMR" id="Q9FH95"/>
<dbReference type="BioGRID" id="22095">
    <property type="interactions" value="16"/>
</dbReference>
<dbReference type="IntAct" id="Q9FH95">
    <property type="interactions" value="15"/>
</dbReference>
<dbReference type="STRING" id="3702.Q9FH95"/>
<dbReference type="PaxDb" id="3702-AT5G67180.1"/>
<dbReference type="ProteomicsDB" id="234361"/>
<dbReference type="EnsemblPlants" id="AT5G67180.1">
    <property type="protein sequence ID" value="AT5G67180.1"/>
    <property type="gene ID" value="AT5G67180"/>
</dbReference>
<dbReference type="GeneID" id="836853"/>
<dbReference type="Gramene" id="AT5G67180.1">
    <property type="protein sequence ID" value="AT5G67180.1"/>
    <property type="gene ID" value="AT5G67180"/>
</dbReference>
<dbReference type="KEGG" id="ath:AT5G67180"/>
<dbReference type="Araport" id="AT5G67180"/>
<dbReference type="TAIR" id="AT5G67180">
    <property type="gene designation" value="TOE3"/>
</dbReference>
<dbReference type="eggNOG" id="ENOG502QQXB">
    <property type="taxonomic scope" value="Eukaryota"/>
</dbReference>
<dbReference type="HOGENOM" id="CLU_035462_4_0_1"/>
<dbReference type="InParanoid" id="Q9FH95"/>
<dbReference type="OrthoDB" id="207175at2759"/>
<dbReference type="PhylomeDB" id="Q9FH95"/>
<dbReference type="PRO" id="PR:Q9FH95"/>
<dbReference type="Proteomes" id="UP000006548">
    <property type="component" value="Chromosome 5"/>
</dbReference>
<dbReference type="ExpressionAtlas" id="Q9FH95">
    <property type="expression patterns" value="baseline and differential"/>
</dbReference>
<dbReference type="GO" id="GO:0005634">
    <property type="term" value="C:nucleus"/>
    <property type="evidence" value="ECO:0007669"/>
    <property type="project" value="UniProtKB-SubCell"/>
</dbReference>
<dbReference type="GO" id="GO:0003677">
    <property type="term" value="F:DNA binding"/>
    <property type="evidence" value="ECO:0007669"/>
    <property type="project" value="UniProtKB-KW"/>
</dbReference>
<dbReference type="GO" id="GO:0003700">
    <property type="term" value="F:DNA-binding transcription factor activity"/>
    <property type="evidence" value="ECO:0000250"/>
    <property type="project" value="TAIR"/>
</dbReference>
<dbReference type="GO" id="GO:0009873">
    <property type="term" value="P:ethylene-activated signaling pathway"/>
    <property type="evidence" value="ECO:0007669"/>
    <property type="project" value="UniProtKB-KW"/>
</dbReference>
<dbReference type="CDD" id="cd00018">
    <property type="entry name" value="AP2"/>
    <property type="match status" value="2"/>
</dbReference>
<dbReference type="FunFam" id="3.30.730.10:FF:000002">
    <property type="entry name" value="AP2-like ethylene-responsive transcription factor"/>
    <property type="match status" value="1"/>
</dbReference>
<dbReference type="FunFam" id="3.30.730.10:FF:000004">
    <property type="entry name" value="AP2-like ethylene-responsive transcription factor"/>
    <property type="match status" value="1"/>
</dbReference>
<dbReference type="Gene3D" id="3.30.730.10">
    <property type="entry name" value="AP2/ERF domain"/>
    <property type="match status" value="2"/>
</dbReference>
<dbReference type="InterPro" id="IPR001471">
    <property type="entry name" value="AP2/ERF_dom"/>
</dbReference>
<dbReference type="InterPro" id="IPR036955">
    <property type="entry name" value="AP2/ERF_dom_sf"/>
</dbReference>
<dbReference type="InterPro" id="IPR016177">
    <property type="entry name" value="DNA-bd_dom_sf"/>
</dbReference>
<dbReference type="PANTHER" id="PTHR32467">
    <property type="entry name" value="AP2-LIKE ETHYLENE-RESPONSIVE TRANSCRIPTION FACTOR"/>
    <property type="match status" value="1"/>
</dbReference>
<dbReference type="PANTHER" id="PTHR32467:SF188">
    <property type="entry name" value="AP2-LIKE ETHYLENE-RESPONSIVE TRANSCRIPTION FACTOR TOE3"/>
    <property type="match status" value="1"/>
</dbReference>
<dbReference type="Pfam" id="PF00847">
    <property type="entry name" value="AP2"/>
    <property type="match status" value="2"/>
</dbReference>
<dbReference type="PRINTS" id="PR00367">
    <property type="entry name" value="ETHRSPELEMNT"/>
</dbReference>
<dbReference type="SMART" id="SM00380">
    <property type="entry name" value="AP2"/>
    <property type="match status" value="2"/>
</dbReference>
<dbReference type="SUPFAM" id="SSF54171">
    <property type="entry name" value="DNA-binding domain"/>
    <property type="match status" value="2"/>
</dbReference>
<dbReference type="PROSITE" id="PS51032">
    <property type="entry name" value="AP2_ERF"/>
    <property type="match status" value="2"/>
</dbReference>
<reference key="1">
    <citation type="journal article" date="2000" name="DNA Res.">
        <title>Structural analysis of Arabidopsis thaliana chromosome 5. X. Sequence features of the regions of 3,076,755 bp covered by sixty P1 and TAC clones.</title>
        <authorList>
            <person name="Sato S."/>
            <person name="Nakamura Y."/>
            <person name="Kaneko T."/>
            <person name="Katoh T."/>
            <person name="Asamizu E."/>
            <person name="Kotani H."/>
            <person name="Tabata S."/>
        </authorList>
    </citation>
    <scope>NUCLEOTIDE SEQUENCE [LARGE SCALE GENOMIC DNA]</scope>
    <source>
        <strain>cv. Columbia</strain>
    </source>
</reference>
<reference key="2">
    <citation type="journal article" date="2017" name="Plant J.">
        <title>Araport11: a complete reannotation of the Arabidopsis thaliana reference genome.</title>
        <authorList>
            <person name="Cheng C.Y."/>
            <person name="Krishnakumar V."/>
            <person name="Chan A.P."/>
            <person name="Thibaud-Nissen F."/>
            <person name="Schobel S."/>
            <person name="Town C.D."/>
        </authorList>
    </citation>
    <scope>GENOME REANNOTATION</scope>
    <source>
        <strain>cv. Columbia</strain>
    </source>
</reference>
<reference key="3">
    <citation type="submission" date="2004-09" db="EMBL/GenBank/DDBJ databases">
        <title>Large-scale analysis of RIKEN Arabidopsis full-length (RAFL) cDNAs.</title>
        <authorList>
            <person name="Totoki Y."/>
            <person name="Seki M."/>
            <person name="Ishida J."/>
            <person name="Nakajima M."/>
            <person name="Enju A."/>
            <person name="Kamiya A."/>
            <person name="Narusaka M."/>
            <person name="Shin-i T."/>
            <person name="Nakagawa M."/>
            <person name="Sakamoto N."/>
            <person name="Oishi K."/>
            <person name="Kohara Y."/>
            <person name="Kobayashi M."/>
            <person name="Toyoda A."/>
            <person name="Sakaki Y."/>
            <person name="Sakurai T."/>
            <person name="Iida K."/>
            <person name="Akiyama K."/>
            <person name="Satou M."/>
            <person name="Toyoda T."/>
            <person name="Konagaya A."/>
            <person name="Carninci P."/>
            <person name="Kawai J."/>
            <person name="Hayashizaki Y."/>
            <person name="Shinozaki K."/>
        </authorList>
    </citation>
    <scope>NUCLEOTIDE SEQUENCE [LARGE SCALE MRNA]</scope>
    <source>
        <strain>cv. Columbia</strain>
    </source>
</reference>
<reference key="4">
    <citation type="submission" date="2006-10" db="EMBL/GenBank/DDBJ databases">
        <title>Arabidopsis ORF clones.</title>
        <authorList>
            <person name="Quinitio C."/>
            <person name="Chen H."/>
            <person name="Kim C.J."/>
            <person name="Shinn P."/>
            <person name="Ecker J.R."/>
        </authorList>
    </citation>
    <scope>NUCLEOTIDE SEQUENCE [LARGE SCALE MRNA]</scope>
    <source>
        <strain>cv. Columbia</strain>
    </source>
</reference>
<reference key="5">
    <citation type="submission" date="2002-03" db="EMBL/GenBank/DDBJ databases">
        <title>Full-length cDNA from Arabidopsis thaliana.</title>
        <authorList>
            <person name="Brover V.V."/>
            <person name="Troukhan M.E."/>
            <person name="Alexandrov N.A."/>
            <person name="Lu Y.-P."/>
            <person name="Flavell R.B."/>
            <person name="Feldmann K.A."/>
        </authorList>
    </citation>
    <scope>NUCLEOTIDE SEQUENCE [LARGE SCALE MRNA]</scope>
</reference>
<reference key="6">
    <citation type="journal article" date="2005" name="Plant Mol. Biol.">
        <title>AINTEGUMENTA-like (AIL) genes are expressed in young tissues and may specify meristematic or division-competent states.</title>
        <authorList>
            <person name="Nole-Wilson S."/>
            <person name="Tranby T.L."/>
            <person name="Krizek B.A."/>
        </authorList>
    </citation>
    <scope>FUNCTION</scope>
</reference>
<reference key="7">
    <citation type="journal article" date="2003" name="Plant Cell">
        <title>Regulation of flowering time and floral organ identity by a microRNA and its APETALA2-like target genes.</title>
        <authorList>
            <person name="Aukerman M.J."/>
            <person name="Sakai H."/>
        </authorList>
    </citation>
    <scope>FUNCTION</scope>
    <scope>INDUCTION</scope>
</reference>
<reference key="8">
    <citation type="journal article" date="2006" name="Plant Physiol.">
        <title>Genome-wide analysis of the ERF gene family in Arabidopsis and rice.</title>
        <authorList>
            <person name="Nakano T."/>
            <person name="Suzuki K."/>
            <person name="Fujimura T."/>
            <person name="Shinshi H."/>
        </authorList>
    </citation>
    <scope>GENE FAMILY</scope>
    <scope>NOMENCLATURE</scope>
</reference>